<dbReference type="EC" id="2.1.1.-"/>
<dbReference type="EC" id="2.7.7.-"/>
<dbReference type="EC" id="2.7.7.48"/>
<dbReference type="EC" id="3.6.4.13"/>
<dbReference type="EMBL" id="Z92909">
    <property type="protein sequence ID" value="CAB07439.1"/>
    <property type="molecule type" value="Genomic_RNA"/>
</dbReference>
<dbReference type="EMBL" id="Z92909">
    <property type="protein sequence ID" value="CAB07438.1"/>
    <property type="molecule type" value="Genomic_RNA"/>
</dbReference>
<dbReference type="Proteomes" id="UP000008253">
    <property type="component" value="Genome"/>
</dbReference>
<dbReference type="GO" id="GO:0005524">
    <property type="term" value="F:ATP binding"/>
    <property type="evidence" value="ECO:0007669"/>
    <property type="project" value="UniProtKB-KW"/>
</dbReference>
<dbReference type="GO" id="GO:0016887">
    <property type="term" value="F:ATP hydrolysis activity"/>
    <property type="evidence" value="ECO:0007669"/>
    <property type="project" value="RHEA"/>
</dbReference>
<dbReference type="GO" id="GO:0008174">
    <property type="term" value="F:mRNA methyltransferase activity"/>
    <property type="evidence" value="ECO:0007669"/>
    <property type="project" value="InterPro"/>
</dbReference>
<dbReference type="GO" id="GO:0003723">
    <property type="term" value="F:RNA binding"/>
    <property type="evidence" value="ECO:0007669"/>
    <property type="project" value="InterPro"/>
</dbReference>
<dbReference type="GO" id="GO:0003724">
    <property type="term" value="F:RNA helicase activity"/>
    <property type="evidence" value="ECO:0007669"/>
    <property type="project" value="UniProtKB-EC"/>
</dbReference>
<dbReference type="GO" id="GO:0003968">
    <property type="term" value="F:RNA-directed RNA polymerase activity"/>
    <property type="evidence" value="ECO:0007669"/>
    <property type="project" value="UniProtKB-KW"/>
</dbReference>
<dbReference type="GO" id="GO:0006351">
    <property type="term" value="P:DNA-templated transcription"/>
    <property type="evidence" value="ECO:0007669"/>
    <property type="project" value="InterPro"/>
</dbReference>
<dbReference type="GO" id="GO:0016556">
    <property type="term" value="P:mRNA modification"/>
    <property type="evidence" value="ECO:0007669"/>
    <property type="project" value="InterPro"/>
</dbReference>
<dbReference type="GO" id="GO:0006396">
    <property type="term" value="P:RNA processing"/>
    <property type="evidence" value="ECO:0007669"/>
    <property type="project" value="InterPro"/>
</dbReference>
<dbReference type="GO" id="GO:0052170">
    <property type="term" value="P:symbiont-mediated suppression of host innate immune response"/>
    <property type="evidence" value="ECO:0007669"/>
    <property type="project" value="UniProtKB-KW"/>
</dbReference>
<dbReference type="GO" id="GO:0039694">
    <property type="term" value="P:viral RNA genome replication"/>
    <property type="evidence" value="ECO:0007669"/>
    <property type="project" value="InterPro"/>
</dbReference>
<dbReference type="CDD" id="cd23251">
    <property type="entry name" value="Virgaviridae_RdRp"/>
    <property type="match status" value="1"/>
</dbReference>
<dbReference type="Gene3D" id="3.30.450.420">
    <property type="match status" value="1"/>
</dbReference>
<dbReference type="Gene3D" id="3.40.50.300">
    <property type="entry name" value="P-loop containing nucleotide triphosphate hydrolases"/>
    <property type="match status" value="2"/>
</dbReference>
<dbReference type="InterPro" id="IPR027351">
    <property type="entry name" value="(+)RNA_virus_helicase_core_dom"/>
</dbReference>
<dbReference type="InterPro" id="IPR002588">
    <property type="entry name" value="Alphavirus-like_MT_dom"/>
</dbReference>
<dbReference type="InterPro" id="IPR043502">
    <property type="entry name" value="DNA/RNA_pol_sf"/>
</dbReference>
<dbReference type="InterPro" id="IPR027417">
    <property type="entry name" value="P-loop_NTPase"/>
</dbReference>
<dbReference type="InterPro" id="IPR001788">
    <property type="entry name" value="RNA-dep_RNA_pol_alsuvir"/>
</dbReference>
<dbReference type="InterPro" id="IPR007094">
    <property type="entry name" value="RNA-dir_pol_PSvirus"/>
</dbReference>
<dbReference type="InterPro" id="IPR047310">
    <property type="entry name" value="Virgaviridae_RdRp"/>
</dbReference>
<dbReference type="Pfam" id="PF00978">
    <property type="entry name" value="RdRP_2"/>
    <property type="match status" value="1"/>
</dbReference>
<dbReference type="Pfam" id="PF01443">
    <property type="entry name" value="Viral_helicase1"/>
    <property type="match status" value="1"/>
</dbReference>
<dbReference type="Pfam" id="PF01660">
    <property type="entry name" value="Vmethyltransf"/>
    <property type="match status" value="1"/>
</dbReference>
<dbReference type="SUPFAM" id="SSF56672">
    <property type="entry name" value="DNA/RNA polymerases"/>
    <property type="match status" value="1"/>
</dbReference>
<dbReference type="SUPFAM" id="SSF52540">
    <property type="entry name" value="P-loop containing nucleoside triphosphate hydrolases"/>
    <property type="match status" value="1"/>
</dbReference>
<dbReference type="PROSITE" id="PS51743">
    <property type="entry name" value="ALPHAVIRUS_MT"/>
    <property type="match status" value="1"/>
</dbReference>
<dbReference type="PROSITE" id="PS51657">
    <property type="entry name" value="PSRV_HELICASE"/>
    <property type="match status" value="1"/>
</dbReference>
<dbReference type="PROSITE" id="PS50507">
    <property type="entry name" value="RDRP_SSRNA_POS"/>
    <property type="match status" value="1"/>
</dbReference>
<accession>P89676</accession>
<accession>P90349</accession>
<feature type="chain" id="PRO_0000041192" description="Replicase large subunit">
    <location>
        <begin position="1"/>
        <end position="1616"/>
    </location>
</feature>
<feature type="chain" id="PRO_0000041193" description="Replicase small subunit">
    <location>
        <begin position="1"/>
        <end position="1116"/>
    </location>
</feature>
<feature type="domain" description="Alphavirus-like MT" evidence="4">
    <location>
        <begin position="72"/>
        <end position="281"/>
    </location>
</feature>
<feature type="domain" description="(+)RNA virus helicase ATP-binding">
    <location>
        <begin position="801"/>
        <end position="963"/>
    </location>
</feature>
<feature type="domain" description="(+)RNA virus helicase C-terminal">
    <location>
        <begin position="964"/>
        <end position="1116"/>
    </location>
</feature>
<feature type="domain" description="RdRp catalytic" evidence="3">
    <location>
        <begin position="1380"/>
        <end position="1493"/>
    </location>
</feature>
<feature type="region of interest" description="Methyltransferase">
    <location>
        <begin position="50"/>
        <end position="458"/>
    </location>
</feature>
<feature type="region of interest" description="Helicase">
    <location>
        <begin position="830"/>
        <end position="1085"/>
    </location>
</feature>
<feature type="binding site" evidence="2">
    <location>
        <begin position="833"/>
        <end position="840"/>
    </location>
    <ligand>
        <name>ATP</name>
        <dbReference type="ChEBI" id="CHEBI:30616"/>
    </ligand>
</feature>
<keyword id="KW-0067">ATP-binding</keyword>
<keyword id="KW-0347">Helicase</keyword>
<keyword id="KW-0945">Host-virus interaction</keyword>
<keyword id="KW-0378">Hydrolase</keyword>
<keyword id="KW-1090">Inhibition of host innate immune response by virus</keyword>
<keyword id="KW-0547">Nucleotide-binding</keyword>
<keyword id="KW-0548">Nucleotidyltransferase</keyword>
<keyword id="KW-1159">RNA suppression of termination</keyword>
<keyword id="KW-0696">RNA-directed RNA polymerase</keyword>
<keyword id="KW-0941">Suppressor of RNA silencing</keyword>
<keyword id="KW-0808">Transferase</keyword>
<keyword id="KW-0899">Viral immunoevasion</keyword>
<keyword id="KW-0693">Viral RNA replication</keyword>
<name>RDRP_TOMK2</name>
<protein>
    <recommendedName>
        <fullName>Replicase large subunit</fullName>
        <ecNumber>2.1.1.-</ecNumber>
        <ecNumber>2.7.7.-</ecNumber>
        <ecNumber>2.7.7.48</ecNumber>
        <ecNumber>3.6.4.13</ecNumber>
    </recommendedName>
    <alternativeName>
        <fullName>183 kDa protein</fullName>
    </alternativeName>
    <alternativeName>
        <fullName>RNA-directed RNA polymerase</fullName>
    </alternativeName>
    <component>
        <recommendedName>
            <fullName>Replicase small subunit</fullName>
            <ecNumber>2.1.1.-</ecNumber>
            <ecNumber>2.7.7.-</ecNumber>
            <ecNumber>3.6.4.13</ecNumber>
        </recommendedName>
        <alternativeName>
            <fullName>126 kDa protein</fullName>
        </alternativeName>
        <alternativeName>
            <fullName>Methyltransferase/RNA helicase</fullName>
            <shortName>MT/HEL</shortName>
        </alternativeName>
    </component>
</protein>
<reference key="1">
    <citation type="journal article" date="1997" name="Mol. Biol. (Mosk.)">
        <title>Properties and structure of the tobacco mosaic virus strain K2 genome.</title>
        <authorList>
            <person name="Belenovich E.V."/>
            <person name="Generozov E.V."/>
            <person name="Novikov V.K."/>
            <person name="Zavriev S.K."/>
        </authorList>
    </citation>
    <scope>NUCLEOTIDE SEQUENCE [GENOMIC RNA]</scope>
</reference>
<organismHost>
    <name type="scientific">Antirrhinum majus</name>
    <name type="common">Garden snapdragon</name>
    <dbReference type="NCBI Taxonomy" id="4151"/>
</organismHost>
<organismHost>
    <name type="scientific">Capsicum</name>
    <name type="common">peppers</name>
    <dbReference type="NCBI Taxonomy" id="4071"/>
</organismHost>
<organismHost>
    <name type="scientific">Delphinium</name>
    <dbReference type="NCBI Taxonomy" id="46246"/>
</organismHost>
<organismHost>
    <name type="scientific">Petunia</name>
    <dbReference type="NCBI Taxonomy" id="4101"/>
</organismHost>
<organismHost>
    <name type="scientific">Solanum lycopersicum</name>
    <name type="common">Tomato</name>
    <name type="synonym">Lycopersicon esculentum</name>
    <dbReference type="NCBI Taxonomy" id="4081"/>
</organismHost>
<organismHost>
    <name type="scientific">Tagetes</name>
    <name type="common">marigolds</name>
    <dbReference type="NCBI Taxonomy" id="13707"/>
</organismHost>
<sequence length="1616" mass="183617">MAYTQTATSSALLETVRGNNTLVNDLAKRRLYDTAVDEFNARDRRPKVNFSKVVSEEQTLIATKAYPEFQITFYNTQNAVHSLAGGLRSLELEYLMMQIPYGSLTYDIGGNFASHLFKGRAYVHCCMPNLDVRDIMRHEGQKDSIELYLSRLERGNKHVPNFQKEAFERYAEMPNEVVCHDTFQTCRHSQECYTGRVYAIALHSIYDIPADEFGAALLRKNVHVCYAAFHFSENLLLEDSHVNLDEINACFQRDGDRLTFSFASESTLNHSHSYSNILKYVCKTYFPASNREVYMKEFLVTRVNTWFCKFSRIDTFLFYKGVAHKGVDSEQFYKAMEDAWHYKKTLAMCNSERILLEDSSSVNYWFPKMRDMVIVPLFDISLETSKRTRKEVLVSKDFVYTVLNHIRTYQAKALTYSNVLSFVESIRSRVIINGVTARSEWDVDKSLLQSLSMTFFLHTKLAVLKDDLLISKFALGPKTVSQHVWDEISLAFGNAFPSIKERLINRKLIKITENALEIRVPDLYVTFHDRLVSEYKMSVDMPVLDIRKKMEETEEMYNALSELSVLKNSDKFDVDVFSQMCQSLEVDPMTAAKVIVAVMSNESGLTLTFEQPTEANVALALQDSEKASDGALVVTSRDVEEPSIRGSMARGELQLAGLSGDVPESSYTRSEEIESLEQFHMATASSLIHKQMCSIVYTGPLKVQQMKNFIDSLVASLSAAVSNLVKILKDTAAIDLETRQKFGVLDVASKRWLVKPSAKNHAWGVVETHARKYHVALLEHDEFGIITCDNWRRVAVSSESVVYSDMAKLRTLRRLLKDGEPHVSSAKVVLVDGVPGCGKTKEILSRVNFEEDLILVPGRQAAEMIRRRANASGIIVATKDNVRTVDSFLMNYGKGARCQFKRLFIDEGLMLHTGCVNFLVEMSLCDIAYVYGDTQQIPYINRVTGFPYPAHFAKLEVDEVETRRTTLRCPADVTHFLNQRYEGHVMCTSSEKKSVSQEMVSGAASINPVSKPLKGKILTFTQSDKEALLSRGYADVHTVHEVQGETYADVSLVRLTPTPVSIIARDSPHVLVSLSRHTKSLKYYTVVMDPLVSIIRDLERVSSYLLDMYKVDAGTQXQLQVDSVFKNFNLFVAAPKTGDISDMQFYYDKCLPGNSTLLNNYDAVTMKLTDISLNVKDCILDMSKSVAAPKDVKPTLIPMVRTAAEMPRQTGLLENLVAMIKRNFNSPELSGVVDIENTASLVVDKFFDSYLLKEKRKPNKNFSLFSRESLNRWIAKQEQVTIGQLADFDFVDLPAVDQYRHMIKAQPKQKLDLSIQTEYPALQTIVYHSKKINAIFGPLFSELTRQLLDSIDSSRFLFFTRKTPAQIEDFFGDLDSHVPMDVLELDVSKYDKSQNEFHCAVEYEIWRRLGLEDFLAEVWKQGHRKTTLKDYTAGIKTCLWYQRKSGDVTTFIGNTVIIASCLASMLPMEKLIKGAFCGDDSLLYFPKGCEYPDIQQAANLMWNFEAKLFKKQYGYFCGRYVIHHDRGCIVYYDPLKLISKLGAKHIKDWDHLEEFRRSLCDVAESLNNCAYYTQLDDAVGEVHKTAPPGSFVYKSLVKYLSDKVLFRSLFLDGSSC</sequence>
<organism>
    <name type="scientific">Tomato mosaic virus (strain Kazakh K2)</name>
    <name type="common">ToMV</name>
    <name type="synonym">TMV strain K2</name>
    <dbReference type="NCBI Taxonomy" id="138312"/>
    <lineage>
        <taxon>Viruses</taxon>
        <taxon>Riboviria</taxon>
        <taxon>Orthornavirae</taxon>
        <taxon>Kitrinoviricota</taxon>
        <taxon>Alsuviricetes</taxon>
        <taxon>Martellivirales</taxon>
        <taxon>Virgaviridae</taxon>
        <taxon>Tobamovirus</taxon>
        <taxon>Tomato mosaic virus</taxon>
    </lineage>
</organism>
<evidence type="ECO:0000250" key="1"/>
<evidence type="ECO:0000255" key="2"/>
<evidence type="ECO:0000255" key="3">
    <source>
        <dbReference type="PROSITE-ProRule" id="PRU00539"/>
    </source>
</evidence>
<evidence type="ECO:0000255" key="4">
    <source>
        <dbReference type="PROSITE-ProRule" id="PRU01079"/>
    </source>
</evidence>
<evidence type="ECO:0000305" key="5"/>
<comment type="function">
    <molecule>Replicase large subunit</molecule>
    <text>Is an RNA-dependent RNA polymerase active in viral RNA replication.</text>
</comment>
<comment type="function">
    <molecule>Replicase small subunit</molecule>
    <text evidence="1 5">Is a methyltransferase active in RNA capping and an RNA helicase. Methyltransferase displays a cytoplasmic capping enzyme activity. This function is necessary since all viral RNAs are synthesized in the cytoplasm, and host capping enzymes are restricted to the nucleus. Helicase region probably exhibits NTPase and RNA unwinding activities (Potential). It also acts as a suppressor of RNA-mediated gene silencing, also known as post-transcriptional gene silencing (PTGS), a mechanism of plant viral defense that limits the accumulation of viral RNAs. May mediate silencing suppression through either inhibition of HEN1-mediated siRNA or siRNA demethylation (By similarity).</text>
</comment>
<comment type="catalytic activity">
    <reaction evidence="3">
        <text>RNA(n) + a ribonucleoside 5'-triphosphate = RNA(n+1) + diphosphate</text>
        <dbReference type="Rhea" id="RHEA:21248"/>
        <dbReference type="Rhea" id="RHEA-COMP:14527"/>
        <dbReference type="Rhea" id="RHEA-COMP:17342"/>
        <dbReference type="ChEBI" id="CHEBI:33019"/>
        <dbReference type="ChEBI" id="CHEBI:61557"/>
        <dbReference type="ChEBI" id="CHEBI:140395"/>
        <dbReference type="EC" id="2.7.7.48"/>
    </reaction>
</comment>
<comment type="catalytic activity">
    <reaction>
        <text>ATP + H2O = ADP + phosphate + H(+)</text>
        <dbReference type="Rhea" id="RHEA:13065"/>
        <dbReference type="ChEBI" id="CHEBI:15377"/>
        <dbReference type="ChEBI" id="CHEBI:15378"/>
        <dbReference type="ChEBI" id="CHEBI:30616"/>
        <dbReference type="ChEBI" id="CHEBI:43474"/>
        <dbReference type="ChEBI" id="CHEBI:456216"/>
        <dbReference type="EC" id="3.6.4.13"/>
    </reaction>
</comment>
<comment type="subunit">
    <text evidence="1">Heterodimer of a large and a small subunit.</text>
</comment>
<comment type="miscellaneous">
    <text>This protein is translated as a fusion protein by episodic readthrough of a termination codon. When readthrough of the terminator codon TGA occurs between the codons for Gln-1116 and Gln-1118, this results in the addition of the RdRp region to the replicase.</text>
</comment>
<comment type="similarity">
    <text evidence="5">Belongs to the ssRNA positive-strand viruses RNA-directed RNA polymerase family.</text>
</comment>
<proteinExistence type="inferred from homology"/>